<protein>
    <recommendedName>
        <fullName evidence="1">Methionine--tRNA ligase</fullName>
        <ecNumber evidence="1">6.1.1.10</ecNumber>
    </recommendedName>
    <alternativeName>
        <fullName evidence="1">Methionyl-tRNA synthetase</fullName>
        <shortName evidence="1">MetRS</shortName>
    </alternativeName>
</protein>
<gene>
    <name evidence="1" type="primary">metG</name>
    <name type="ordered locus">cu0560</name>
</gene>
<reference key="1">
    <citation type="journal article" date="2008" name="J. Biotechnol.">
        <title>The lifestyle of Corynebacterium urealyticum derived from its complete genome sequence established by pyrosequencing.</title>
        <authorList>
            <person name="Tauch A."/>
            <person name="Trost E."/>
            <person name="Tilker A."/>
            <person name="Ludewig U."/>
            <person name="Schneiker S."/>
            <person name="Goesmann A."/>
            <person name="Arnold W."/>
            <person name="Bekel T."/>
            <person name="Brinkrolf K."/>
            <person name="Brune I."/>
            <person name="Goetker S."/>
            <person name="Kalinowski J."/>
            <person name="Kamp P.-B."/>
            <person name="Lobo F.P."/>
            <person name="Viehoever P."/>
            <person name="Weisshaar B."/>
            <person name="Soriano F."/>
            <person name="Droege M."/>
            <person name="Puehler A."/>
        </authorList>
    </citation>
    <scope>NUCLEOTIDE SEQUENCE [LARGE SCALE GENOMIC DNA]</scope>
    <source>
        <strain>ATCC 43042 / DSM 7109</strain>
    </source>
</reference>
<keyword id="KW-0030">Aminoacyl-tRNA synthetase</keyword>
<keyword id="KW-0067">ATP-binding</keyword>
<keyword id="KW-0963">Cytoplasm</keyword>
<keyword id="KW-0436">Ligase</keyword>
<keyword id="KW-0479">Metal-binding</keyword>
<keyword id="KW-0547">Nucleotide-binding</keyword>
<keyword id="KW-0648">Protein biosynthesis</keyword>
<keyword id="KW-1185">Reference proteome</keyword>
<keyword id="KW-0862">Zinc</keyword>
<accession>B1VFI1</accession>
<name>SYM_CORU7</name>
<proteinExistence type="inferred from homology"/>
<organism>
    <name type="scientific">Corynebacterium urealyticum (strain ATCC 43042 / DSM 7109)</name>
    <dbReference type="NCBI Taxonomy" id="504474"/>
    <lineage>
        <taxon>Bacteria</taxon>
        <taxon>Bacillati</taxon>
        <taxon>Actinomycetota</taxon>
        <taxon>Actinomycetes</taxon>
        <taxon>Mycobacteriales</taxon>
        <taxon>Corynebacteriaceae</taxon>
        <taxon>Corynebacterium</taxon>
    </lineage>
</organism>
<sequence length="611" mass="68264">MSKRVLTSVAWPYANGPRHIGHVAGFGVPSDVFARYQRMIGNDVLMVSGTDEHGTPLLVQADKENTTVRELADRYNRIIVEDLVGLGLSYDLFTRTTTRNHYAIVQELFRGLNENGYMLKQTTRGAVSPSTGRTLPDRYIEGTCPLCGATDARGDQCDNCGNQLDPADLIDPRSKINGETPEFVDTEHFMLDLPALAEALEEWLKGRNDWRPNVLKFSLNLLKDIRPRAMSRDIDWGVPVPIEGWQDNNAKKLYVWFDAVVGYLSASIEWAWRTGDPEAWRKWWNDPEAVSYYFMGKDNITFHSQIWPGEMLGYAGKGSKGGEQGELGELNLPTEVVSSEFLTMSGSKFSSSKGVVIYVRDFLKEFGPDALRYFIAVAGPENTDTDFTWDEFVRRINSELANEWGNLVNRTASMAHKNFGEIPQPGEFTAEDQALLDEAKQAYTVVGDALQLSKFKAGMTEAMRIAARANQYIAAQEPWKLAKDETQRERLATVLYVALQVVSDVNTLMTPYLPFSAQKVFETLGGEGIWAAQPEIVEVKDESPYTPVGVGLPEEGSSYPVIMGNYTEQKAIWQRTELAPGTALSKPKPLFQKLDPELAETGPEWAPVVKD</sequence>
<evidence type="ECO:0000255" key="1">
    <source>
        <dbReference type="HAMAP-Rule" id="MF_00098"/>
    </source>
</evidence>
<comment type="function">
    <text evidence="1">Is required not only for elongation of protein synthesis but also for the initiation of all mRNA translation through initiator tRNA(fMet) aminoacylation.</text>
</comment>
<comment type="catalytic activity">
    <reaction evidence="1">
        <text>tRNA(Met) + L-methionine + ATP = L-methionyl-tRNA(Met) + AMP + diphosphate</text>
        <dbReference type="Rhea" id="RHEA:13481"/>
        <dbReference type="Rhea" id="RHEA-COMP:9667"/>
        <dbReference type="Rhea" id="RHEA-COMP:9698"/>
        <dbReference type="ChEBI" id="CHEBI:30616"/>
        <dbReference type="ChEBI" id="CHEBI:33019"/>
        <dbReference type="ChEBI" id="CHEBI:57844"/>
        <dbReference type="ChEBI" id="CHEBI:78442"/>
        <dbReference type="ChEBI" id="CHEBI:78530"/>
        <dbReference type="ChEBI" id="CHEBI:456215"/>
        <dbReference type="EC" id="6.1.1.10"/>
    </reaction>
</comment>
<comment type="cofactor">
    <cofactor evidence="1">
        <name>Zn(2+)</name>
        <dbReference type="ChEBI" id="CHEBI:29105"/>
    </cofactor>
    <text evidence="1">Binds 1 zinc ion per subunit.</text>
</comment>
<comment type="subunit">
    <text evidence="1">Monomer.</text>
</comment>
<comment type="subcellular location">
    <subcellularLocation>
        <location evidence="1">Cytoplasm</location>
    </subcellularLocation>
</comment>
<comment type="similarity">
    <text evidence="1">Belongs to the class-I aminoacyl-tRNA synthetase family. MetG type 1 subfamily.</text>
</comment>
<feature type="chain" id="PRO_1000093708" description="Methionine--tRNA ligase">
    <location>
        <begin position="1"/>
        <end position="611"/>
    </location>
</feature>
<feature type="short sequence motif" description="'HIGH' region">
    <location>
        <begin position="12"/>
        <end position="22"/>
    </location>
</feature>
<feature type="short sequence motif" description="'KMSKS' region">
    <location>
        <begin position="348"/>
        <end position="352"/>
    </location>
</feature>
<feature type="binding site" evidence="1">
    <location>
        <position position="144"/>
    </location>
    <ligand>
        <name>Zn(2+)</name>
        <dbReference type="ChEBI" id="CHEBI:29105"/>
    </ligand>
</feature>
<feature type="binding site" evidence="1">
    <location>
        <position position="147"/>
    </location>
    <ligand>
        <name>Zn(2+)</name>
        <dbReference type="ChEBI" id="CHEBI:29105"/>
    </ligand>
</feature>
<feature type="binding site" evidence="1">
    <location>
        <position position="157"/>
    </location>
    <ligand>
        <name>Zn(2+)</name>
        <dbReference type="ChEBI" id="CHEBI:29105"/>
    </ligand>
</feature>
<feature type="binding site" evidence="1">
    <location>
        <position position="160"/>
    </location>
    <ligand>
        <name>Zn(2+)</name>
        <dbReference type="ChEBI" id="CHEBI:29105"/>
    </ligand>
</feature>
<feature type="binding site" evidence="1">
    <location>
        <position position="351"/>
    </location>
    <ligand>
        <name>ATP</name>
        <dbReference type="ChEBI" id="CHEBI:30616"/>
    </ligand>
</feature>
<dbReference type="EC" id="6.1.1.10" evidence="1"/>
<dbReference type="EMBL" id="AM942444">
    <property type="protein sequence ID" value="CAQ04520.1"/>
    <property type="molecule type" value="Genomic_DNA"/>
</dbReference>
<dbReference type="RefSeq" id="WP_012359812.1">
    <property type="nucleotide sequence ID" value="NC_010545.1"/>
</dbReference>
<dbReference type="SMR" id="B1VFI1"/>
<dbReference type="STRING" id="504474.cu0560"/>
<dbReference type="GeneID" id="60605360"/>
<dbReference type="KEGG" id="cur:cu0560"/>
<dbReference type="eggNOG" id="COG0143">
    <property type="taxonomic scope" value="Bacteria"/>
</dbReference>
<dbReference type="HOGENOM" id="CLU_009710_1_2_11"/>
<dbReference type="Proteomes" id="UP000001727">
    <property type="component" value="Chromosome"/>
</dbReference>
<dbReference type="GO" id="GO:0005829">
    <property type="term" value="C:cytosol"/>
    <property type="evidence" value="ECO:0007669"/>
    <property type="project" value="TreeGrafter"/>
</dbReference>
<dbReference type="GO" id="GO:0005524">
    <property type="term" value="F:ATP binding"/>
    <property type="evidence" value="ECO:0007669"/>
    <property type="project" value="UniProtKB-UniRule"/>
</dbReference>
<dbReference type="GO" id="GO:0046872">
    <property type="term" value="F:metal ion binding"/>
    <property type="evidence" value="ECO:0007669"/>
    <property type="project" value="UniProtKB-KW"/>
</dbReference>
<dbReference type="GO" id="GO:0004825">
    <property type="term" value="F:methionine-tRNA ligase activity"/>
    <property type="evidence" value="ECO:0007669"/>
    <property type="project" value="UniProtKB-UniRule"/>
</dbReference>
<dbReference type="GO" id="GO:0006431">
    <property type="term" value="P:methionyl-tRNA aminoacylation"/>
    <property type="evidence" value="ECO:0007669"/>
    <property type="project" value="UniProtKB-UniRule"/>
</dbReference>
<dbReference type="CDD" id="cd07957">
    <property type="entry name" value="Anticodon_Ia_Met"/>
    <property type="match status" value="1"/>
</dbReference>
<dbReference type="CDD" id="cd00814">
    <property type="entry name" value="MetRS_core"/>
    <property type="match status" value="1"/>
</dbReference>
<dbReference type="FunFam" id="2.20.28.20:FF:000001">
    <property type="entry name" value="Methionine--tRNA ligase"/>
    <property type="match status" value="1"/>
</dbReference>
<dbReference type="Gene3D" id="3.40.50.620">
    <property type="entry name" value="HUPs"/>
    <property type="match status" value="1"/>
</dbReference>
<dbReference type="Gene3D" id="1.10.730.10">
    <property type="entry name" value="Isoleucyl-tRNA Synthetase, Domain 1"/>
    <property type="match status" value="1"/>
</dbReference>
<dbReference type="Gene3D" id="2.20.28.20">
    <property type="entry name" value="Methionyl-tRNA synthetase, Zn-domain"/>
    <property type="match status" value="1"/>
</dbReference>
<dbReference type="HAMAP" id="MF_00098">
    <property type="entry name" value="Met_tRNA_synth_type1"/>
    <property type="match status" value="1"/>
</dbReference>
<dbReference type="InterPro" id="IPR041872">
    <property type="entry name" value="Anticodon_Met"/>
</dbReference>
<dbReference type="InterPro" id="IPR023458">
    <property type="entry name" value="Met-tRNA_ligase_1"/>
</dbReference>
<dbReference type="InterPro" id="IPR014758">
    <property type="entry name" value="Met-tRNA_synth"/>
</dbReference>
<dbReference type="InterPro" id="IPR015413">
    <property type="entry name" value="Methionyl/Leucyl_tRNA_Synth"/>
</dbReference>
<dbReference type="InterPro" id="IPR033911">
    <property type="entry name" value="MetRS_core"/>
</dbReference>
<dbReference type="InterPro" id="IPR029038">
    <property type="entry name" value="MetRS_Zn"/>
</dbReference>
<dbReference type="InterPro" id="IPR014729">
    <property type="entry name" value="Rossmann-like_a/b/a_fold"/>
</dbReference>
<dbReference type="InterPro" id="IPR009080">
    <property type="entry name" value="tRNAsynth_Ia_anticodon-bd"/>
</dbReference>
<dbReference type="NCBIfam" id="TIGR00398">
    <property type="entry name" value="metG"/>
    <property type="match status" value="1"/>
</dbReference>
<dbReference type="PANTHER" id="PTHR45765">
    <property type="entry name" value="METHIONINE--TRNA LIGASE"/>
    <property type="match status" value="1"/>
</dbReference>
<dbReference type="PANTHER" id="PTHR45765:SF1">
    <property type="entry name" value="METHIONINE--TRNA LIGASE, CYTOPLASMIC"/>
    <property type="match status" value="1"/>
</dbReference>
<dbReference type="Pfam" id="PF19303">
    <property type="entry name" value="Anticodon_3"/>
    <property type="match status" value="1"/>
</dbReference>
<dbReference type="Pfam" id="PF09334">
    <property type="entry name" value="tRNA-synt_1g"/>
    <property type="match status" value="1"/>
</dbReference>
<dbReference type="PRINTS" id="PR01041">
    <property type="entry name" value="TRNASYNTHMET"/>
</dbReference>
<dbReference type="SUPFAM" id="SSF47323">
    <property type="entry name" value="Anticodon-binding domain of a subclass of class I aminoacyl-tRNA synthetases"/>
    <property type="match status" value="1"/>
</dbReference>
<dbReference type="SUPFAM" id="SSF57770">
    <property type="entry name" value="Methionyl-tRNA synthetase (MetRS), Zn-domain"/>
    <property type="match status" value="1"/>
</dbReference>
<dbReference type="SUPFAM" id="SSF52374">
    <property type="entry name" value="Nucleotidylyl transferase"/>
    <property type="match status" value="1"/>
</dbReference>